<comment type="function">
    <molecule>Gasdermin-A</molecule>
    <text evidence="7 8 9">This form constitutes the precursor of the pore-forming protein and acts as a sensor of infection: upon infection by S.pyogenes, specifically cleaved by S.pyogenes effector protein SpeB in epithelial cells, releasing the N-terminal moiety (Gasdermin-A, N-terminal) that binds to membranes and forms pores, triggering pyroptosis.</text>
</comment>
<comment type="function">
    <molecule>Gasdermin-A, N-terminal</molecule>
    <text evidence="5 7 8 9">Pore-forming protein that causes membrane permeabilization and pyroptosis (PubMed:17471240, PubMed:27281216, PubMed:35110732, PubMed:35545676). Released upon cleavage by S.pyogenes effector protein SpeB, and binds to membrane inner leaflet lipids (PubMed:27281216, PubMed:35110732, PubMed:35545676). Homooligomerizes within the membrane and forms pores of 10-15 nanometers (nm) of inner diameter, triggering pyroptosis (PubMed:27281216, PubMed:35110732, PubMed:35545676). Pyroptosis triggers the elimination of the infected skin cell, depriving the pathogen of its protective niche, while inducing an inflammatory response (PubMed:35110732, PubMed:35545676). This ultimately prevents bacterial penetration of the epithelial barrier and a subsequent systemic dissemination of the pathogen (PubMed:35110732, PubMed:35545676). Binds to cardiolipin and other acidic phospholipids, such as phosphatidylserine, which mediate its targeting to the inner leaflet membrane (PubMed:27281216, PubMed:35110732).</text>
</comment>
<comment type="activity regulation">
    <molecule>Gasdermin-A</molecule>
    <text evidence="1 8 9">The full-length protein before cleavage is inactive: intramolecular interactions between N- and C-terminal domains mediate autoinhibition in the absence of activation signal (By similarity). The intrinsic pyroptosis-inducing activity is carried by the released N-terminal moiety (Gasdermin-A, N-terminal) following cleavage by S.pyogenes effector protein SpeB (PubMed:35110732, PubMed:35545676).</text>
</comment>
<comment type="subunit">
    <molecule>Gasdermin-A, N-terminal</molecule>
    <text evidence="8">Homooligomer; homooligomeric ring-shaped pore complex containing 18-36 subunits when inserted in the membrane.</text>
</comment>
<comment type="interaction">
    <interactant intactId="EBI-11320924">
        <id>Q96QA5</id>
    </interactant>
    <interactant intactId="EBI-1220105">
        <id>P02654</id>
        <label>APOC1</label>
    </interactant>
    <organismsDiffer>false</organismsDiffer>
    <experiments>3</experiments>
</comment>
<comment type="interaction">
    <interactant intactId="EBI-11320924">
        <id>Q96QA5</id>
    </interactant>
    <interactant intactId="EBI-18302142">
        <id>P55056</id>
        <label>APOC4</label>
    </interactant>
    <organismsDiffer>false</organismsDiffer>
    <experiments>3</experiments>
</comment>
<comment type="subcellular location">
    <molecule>Gasdermin-A</molecule>
    <subcellularLocation>
        <location evidence="5">Cytoplasm</location>
        <location evidence="5">Perinuclear region</location>
    </subcellularLocation>
    <subcellularLocation>
        <location evidence="1">Cytoplasm</location>
        <location evidence="1">Cytosol</location>
    </subcellularLocation>
</comment>
<comment type="subcellular location">
    <molecule>Gasdermin-A, N-terminal</molecule>
    <subcellularLocation>
        <location evidence="8 9">Cell membrane</location>
        <topology evidence="1">Multi-pass membrane protein</topology>
    </subcellularLocation>
</comment>
<comment type="tissue specificity">
    <text evidence="2 5 6">Expressed predominantly in the gastrointestinal tract and, at a lower level, in the skin. Also detected in mammary gland. In the gastrointestinal tract, mainly expressed in differentiated cells, including the differentiated cell layer of esophagus and mucus-secreting pit cells of the gastric epithelium. Down-regulated in gastric cancer cells.</text>
</comment>
<comment type="domain">
    <text evidence="1">Intramolecular interactions between N- and C-terminal domains are important for autoinhibition in the absence of activation signal. The intrinsic pyroptosis-inducing activity is carried by the N-terminal domain.</text>
</comment>
<comment type="PTM">
    <text evidence="8 9">Cleavage by S.pyogenes SpeB relieves autoinhibition by releasing the N-terminal moiety (Gasdermin-A, N-terminal) that initiates pyroptosis.</text>
</comment>
<comment type="PTM">
    <text evidence="10">Palmitoylated.</text>
</comment>
<comment type="similarity">
    <text evidence="14">Belongs to the gasdermin family.</text>
</comment>
<comment type="online information" name="Atlas of Genetics and Cytogenetics in Oncology and Haematology">
    <link uri="https://atlasgeneticsoncology.org/gene/45650/GSDMA"/>
</comment>
<accession>Q96QA5</accession>
<accession>Q32MC5</accession>
<accession>Q86VE7</accession>
<accession>Q8N1M6</accession>
<organism>
    <name type="scientific">Homo sapiens</name>
    <name type="common">Human</name>
    <dbReference type="NCBI Taxonomy" id="9606"/>
    <lineage>
        <taxon>Eukaryota</taxon>
        <taxon>Metazoa</taxon>
        <taxon>Chordata</taxon>
        <taxon>Craniata</taxon>
        <taxon>Vertebrata</taxon>
        <taxon>Euteleostomi</taxon>
        <taxon>Mammalia</taxon>
        <taxon>Eutheria</taxon>
        <taxon>Euarchontoglires</taxon>
        <taxon>Primates</taxon>
        <taxon>Haplorrhini</taxon>
        <taxon>Catarrhini</taxon>
        <taxon>Hominidae</taxon>
        <taxon>Homo</taxon>
    </lineage>
</organism>
<dbReference type="EMBL" id="AB093591">
    <property type="protein sequence ID" value="BAC75636.1"/>
    <property type="molecule type" value="mRNA"/>
</dbReference>
<dbReference type="EMBL" id="AF307953">
    <property type="protein sequence ID" value="AAL14426.1"/>
    <property type="molecule type" value="mRNA"/>
</dbReference>
<dbReference type="EMBL" id="AK096439">
    <property type="protein sequence ID" value="BAC04790.1"/>
    <property type="molecule type" value="mRNA"/>
</dbReference>
<dbReference type="EMBL" id="AC090844">
    <property type="status" value="NOT_ANNOTATED_CDS"/>
    <property type="molecule type" value="Genomic_DNA"/>
</dbReference>
<dbReference type="EMBL" id="BC109197">
    <property type="protein sequence ID" value="AAI09198.1"/>
    <property type="molecule type" value="mRNA"/>
</dbReference>
<dbReference type="CCDS" id="CCDS45669.1"/>
<dbReference type="RefSeq" id="NP_835465.2">
    <property type="nucleotide sequence ID" value="NM_178171.5"/>
</dbReference>
<dbReference type="RefSeq" id="XP_006721895.1">
    <property type="nucleotide sequence ID" value="XM_006721832.4"/>
</dbReference>
<dbReference type="SMR" id="Q96QA5"/>
<dbReference type="BioGRID" id="129762">
    <property type="interactions" value="131"/>
</dbReference>
<dbReference type="FunCoup" id="Q96QA5">
    <property type="interactions" value="204"/>
</dbReference>
<dbReference type="IntAct" id="Q96QA5">
    <property type="interactions" value="70"/>
</dbReference>
<dbReference type="MINT" id="Q96QA5"/>
<dbReference type="STRING" id="9606.ENSP00000301659"/>
<dbReference type="TCDB" id="1.C.123.1.2">
    <property type="family name" value="the pore-forming gasdermin (gasdermin) family"/>
</dbReference>
<dbReference type="GlyGen" id="Q96QA5">
    <property type="glycosylation" value="1 site, 1 O-linked glycan (1 site)"/>
</dbReference>
<dbReference type="iPTMnet" id="Q96QA5"/>
<dbReference type="PhosphoSitePlus" id="Q96QA5"/>
<dbReference type="SwissPalm" id="Q96QA5"/>
<dbReference type="BioMuta" id="GSDMA"/>
<dbReference type="DMDM" id="296439478"/>
<dbReference type="jPOST" id="Q96QA5"/>
<dbReference type="MassIVE" id="Q96QA5"/>
<dbReference type="PaxDb" id="9606-ENSP00000301659"/>
<dbReference type="PeptideAtlas" id="Q96QA5"/>
<dbReference type="PRIDE" id="Q96QA5"/>
<dbReference type="ProteomicsDB" id="77846"/>
<dbReference type="Antibodypedia" id="7880">
    <property type="antibodies" value="105 antibodies from 21 providers"/>
</dbReference>
<dbReference type="DNASU" id="284110"/>
<dbReference type="Ensembl" id="ENST00000301659.9">
    <property type="protein sequence ID" value="ENSP00000301659.4"/>
    <property type="gene ID" value="ENSG00000167914.12"/>
</dbReference>
<dbReference type="Ensembl" id="ENST00000635792.1">
    <property type="protein sequence ID" value="ENSP00000490739.1"/>
    <property type="gene ID" value="ENSG00000167914.12"/>
</dbReference>
<dbReference type="GeneID" id="284110"/>
<dbReference type="KEGG" id="hsa:284110"/>
<dbReference type="MANE-Select" id="ENST00000301659.9">
    <property type="protein sequence ID" value="ENSP00000301659.4"/>
    <property type="RefSeq nucleotide sequence ID" value="NM_178171.5"/>
    <property type="RefSeq protein sequence ID" value="NP_835465.2"/>
</dbReference>
<dbReference type="UCSC" id="uc002htl.1">
    <property type="organism name" value="human"/>
</dbReference>
<dbReference type="AGR" id="HGNC:13311"/>
<dbReference type="CTD" id="284110"/>
<dbReference type="DisGeNET" id="284110"/>
<dbReference type="GeneCards" id="GSDMA"/>
<dbReference type="HGNC" id="HGNC:13311">
    <property type="gene designation" value="GSDMA"/>
</dbReference>
<dbReference type="HPA" id="ENSG00000167914">
    <property type="expression patterns" value="Tissue enriched (skin)"/>
</dbReference>
<dbReference type="MIM" id="611218">
    <property type="type" value="gene"/>
</dbReference>
<dbReference type="neXtProt" id="NX_Q96QA5"/>
<dbReference type="OpenTargets" id="ENSG00000167914"/>
<dbReference type="PharmGKB" id="PA162390274"/>
<dbReference type="VEuPathDB" id="HostDB:ENSG00000167914"/>
<dbReference type="eggNOG" id="ENOG502S0IQ">
    <property type="taxonomic scope" value="Eukaryota"/>
</dbReference>
<dbReference type="GeneTree" id="ENSGT00950000183140"/>
<dbReference type="HOGENOM" id="CLU_040752_0_0_1"/>
<dbReference type="InParanoid" id="Q96QA5"/>
<dbReference type="OMA" id="HICNDSM"/>
<dbReference type="OrthoDB" id="9944616at2759"/>
<dbReference type="PAN-GO" id="Q96QA5">
    <property type="GO annotations" value="5 GO annotations based on evolutionary models"/>
</dbReference>
<dbReference type="PhylomeDB" id="Q96QA5"/>
<dbReference type="TreeFam" id="TF331886"/>
<dbReference type="PathwayCommons" id="Q96QA5"/>
<dbReference type="SignaLink" id="Q96QA5"/>
<dbReference type="BioGRID-ORCS" id="284110">
    <property type="hits" value="218 hits in 1140 CRISPR screens"/>
</dbReference>
<dbReference type="CD-CODE" id="232F8A39">
    <property type="entry name" value="P-body"/>
</dbReference>
<dbReference type="GenomeRNAi" id="284110"/>
<dbReference type="Pharos" id="Q96QA5">
    <property type="development level" value="Tbio"/>
</dbReference>
<dbReference type="PRO" id="PR:Q96QA5"/>
<dbReference type="Proteomes" id="UP000005640">
    <property type="component" value="Chromosome 17"/>
</dbReference>
<dbReference type="RNAct" id="Q96QA5">
    <property type="molecule type" value="protein"/>
</dbReference>
<dbReference type="Bgee" id="ENSG00000167914">
    <property type="expression patterns" value="Expressed in skin of leg and 80 other cell types or tissues"/>
</dbReference>
<dbReference type="ExpressionAtlas" id="Q96QA5">
    <property type="expression patterns" value="baseline and differential"/>
</dbReference>
<dbReference type="GO" id="GO:0005829">
    <property type="term" value="C:cytosol"/>
    <property type="evidence" value="ECO:0007669"/>
    <property type="project" value="UniProtKB-SubCell"/>
</dbReference>
<dbReference type="GO" id="GO:0016020">
    <property type="term" value="C:membrane"/>
    <property type="evidence" value="ECO:0000314"/>
    <property type="project" value="UniProt"/>
</dbReference>
<dbReference type="GO" id="GO:0048471">
    <property type="term" value="C:perinuclear region of cytoplasm"/>
    <property type="evidence" value="ECO:0000314"/>
    <property type="project" value="UniProtKB"/>
</dbReference>
<dbReference type="GO" id="GO:0005886">
    <property type="term" value="C:plasma membrane"/>
    <property type="evidence" value="ECO:0007669"/>
    <property type="project" value="UniProtKB-SubCell"/>
</dbReference>
<dbReference type="GO" id="GO:0005546">
    <property type="term" value="F:phosphatidylinositol-4,5-bisphosphate binding"/>
    <property type="evidence" value="ECO:0000318"/>
    <property type="project" value="GO_Central"/>
</dbReference>
<dbReference type="GO" id="GO:0070273">
    <property type="term" value="F:phosphatidylinositol-4-phosphate binding"/>
    <property type="evidence" value="ECO:0000318"/>
    <property type="project" value="GO_Central"/>
</dbReference>
<dbReference type="GO" id="GO:0001786">
    <property type="term" value="F:phosphatidylserine binding"/>
    <property type="evidence" value="ECO:0000318"/>
    <property type="project" value="GO_Central"/>
</dbReference>
<dbReference type="GO" id="GO:0022829">
    <property type="term" value="F:wide pore channel activity"/>
    <property type="evidence" value="ECO:0000314"/>
    <property type="project" value="UniProt"/>
</dbReference>
<dbReference type="GO" id="GO:0042742">
    <property type="term" value="P:defense response to bacterium"/>
    <property type="evidence" value="ECO:0000314"/>
    <property type="project" value="UniProtKB"/>
</dbReference>
<dbReference type="GO" id="GO:0012501">
    <property type="term" value="P:programmed cell death"/>
    <property type="evidence" value="ECO:0007669"/>
    <property type="project" value="UniProtKB-KW"/>
</dbReference>
<dbReference type="GO" id="GO:0070269">
    <property type="term" value="P:pyroptotic inflammatory response"/>
    <property type="evidence" value="ECO:0000314"/>
    <property type="project" value="UniProt"/>
</dbReference>
<dbReference type="InterPro" id="IPR007677">
    <property type="entry name" value="Gasdermin"/>
</dbReference>
<dbReference type="InterPro" id="IPR040460">
    <property type="entry name" value="Gasdermin_pore"/>
</dbReference>
<dbReference type="InterPro" id="IPR041263">
    <property type="entry name" value="Gasdermin_PUB"/>
</dbReference>
<dbReference type="PANTHER" id="PTHR16399">
    <property type="entry name" value="GASDERMIN"/>
    <property type="match status" value="1"/>
</dbReference>
<dbReference type="PANTHER" id="PTHR16399:SF18">
    <property type="entry name" value="GASDERMIN-A"/>
    <property type="match status" value="1"/>
</dbReference>
<dbReference type="Pfam" id="PF04598">
    <property type="entry name" value="Gasdermin"/>
    <property type="match status" value="1"/>
</dbReference>
<dbReference type="Pfam" id="PF17708">
    <property type="entry name" value="Gasdermin_C"/>
    <property type="match status" value="1"/>
</dbReference>
<evidence type="ECO:0000250" key="1">
    <source>
        <dbReference type="UniProtKB" id="Q5Y4Y6"/>
    </source>
</evidence>
<evidence type="ECO:0000269" key="2">
    <source>
    </source>
</evidence>
<evidence type="ECO:0000269" key="3">
    <source>
    </source>
</evidence>
<evidence type="ECO:0000269" key="4">
    <source>
    </source>
</evidence>
<evidence type="ECO:0000269" key="5">
    <source>
    </source>
</evidence>
<evidence type="ECO:0000269" key="6">
    <source>
    </source>
</evidence>
<evidence type="ECO:0000269" key="7">
    <source>
    </source>
</evidence>
<evidence type="ECO:0000269" key="8">
    <source>
    </source>
</evidence>
<evidence type="ECO:0000269" key="9">
    <source>
    </source>
</evidence>
<evidence type="ECO:0000269" key="10">
    <source>
    </source>
</evidence>
<evidence type="ECO:0000303" key="11">
    <source>
    </source>
</evidence>
<evidence type="ECO:0000303" key="12">
    <source>
    </source>
</evidence>
<evidence type="ECO:0000303" key="13">
    <source ref="2"/>
</evidence>
<evidence type="ECO:0000305" key="14"/>
<evidence type="ECO:0000305" key="15">
    <source>
    </source>
</evidence>
<evidence type="ECO:0000305" key="16">
    <source>
    </source>
</evidence>
<evidence type="ECO:0000312" key="17">
    <source>
        <dbReference type="HGNC" id="HGNC:13311"/>
    </source>
</evidence>
<protein>
    <recommendedName>
        <fullName evidence="14">Gasdermin-A</fullName>
    </recommendedName>
    <alternativeName>
        <fullName>Gasdermin-1</fullName>
    </alternativeName>
    <component>
        <recommendedName>
            <fullName evidence="14">Gasdermin-A, N-terminal</fullName>
            <shortName evidence="14">GSDMA-NT</shortName>
        </recommendedName>
    </component>
    <component>
        <recommendedName>
            <fullName evidence="14">Gasdermin-A, C-terminal</fullName>
            <shortName evidence="14">GSDMA-CT</shortName>
        </recommendedName>
    </component>
</protein>
<reference key="1">
    <citation type="journal article" date="2007" name="Oncogene">
        <title>GASDERMIN, suppressed frequently in gastric cancer, is a target of LMO1 in TGF-beta-dependent apoptotic signalling.</title>
        <authorList>
            <person name="Saeki N."/>
            <person name="Kim D.H."/>
            <person name="Usui T."/>
            <person name="Aoyagi K."/>
            <person name="Tatsuta T."/>
            <person name="Aoki K."/>
            <person name="Yanagihara K."/>
            <person name="Tamura M."/>
            <person name="Mizushima H."/>
            <person name="Sakamoto H."/>
            <person name="Ogawa K."/>
            <person name="Ohki M."/>
            <person name="Shiroishi T."/>
            <person name="Yoshida T."/>
            <person name="Sasaki H."/>
        </authorList>
    </citation>
    <scope>NUCLEOTIDE SEQUENCE [MRNA]</scope>
    <scope>FUNCTION</scope>
    <scope>SUBCELLULAR LOCATION</scope>
    <scope>TISSUE SPECIFICITY</scope>
    <scope>VARIANTS LEU-128 AND LYS-130</scope>
    <source>
        <tissue>Stomach</tissue>
    </source>
</reference>
<reference key="2">
    <citation type="submission" date="2000-09" db="EMBL/GenBank/DDBJ databases">
        <title>FKSG9, a gastric cancer-related gene, is localized to human chromosome 17.</title>
        <authorList>
            <person name="Wang Y.-G."/>
        </authorList>
    </citation>
    <scope>NUCLEOTIDE SEQUENCE [MRNA]</scope>
</reference>
<reference key="3">
    <citation type="journal article" date="2004" name="Nat. Genet.">
        <title>Complete sequencing and characterization of 21,243 full-length human cDNAs.</title>
        <authorList>
            <person name="Ota T."/>
            <person name="Suzuki Y."/>
            <person name="Nishikawa T."/>
            <person name="Otsuki T."/>
            <person name="Sugiyama T."/>
            <person name="Irie R."/>
            <person name="Wakamatsu A."/>
            <person name="Hayashi K."/>
            <person name="Sato H."/>
            <person name="Nagai K."/>
            <person name="Kimura K."/>
            <person name="Makita H."/>
            <person name="Sekine M."/>
            <person name="Obayashi M."/>
            <person name="Nishi T."/>
            <person name="Shibahara T."/>
            <person name="Tanaka T."/>
            <person name="Ishii S."/>
            <person name="Yamamoto J."/>
            <person name="Saito K."/>
            <person name="Kawai Y."/>
            <person name="Isono Y."/>
            <person name="Nakamura Y."/>
            <person name="Nagahari K."/>
            <person name="Murakami K."/>
            <person name="Yasuda T."/>
            <person name="Iwayanagi T."/>
            <person name="Wagatsuma M."/>
            <person name="Shiratori A."/>
            <person name="Sudo H."/>
            <person name="Hosoiri T."/>
            <person name="Kaku Y."/>
            <person name="Kodaira H."/>
            <person name="Kondo H."/>
            <person name="Sugawara M."/>
            <person name="Takahashi M."/>
            <person name="Kanda K."/>
            <person name="Yokoi T."/>
            <person name="Furuya T."/>
            <person name="Kikkawa E."/>
            <person name="Omura Y."/>
            <person name="Abe K."/>
            <person name="Kamihara K."/>
            <person name="Katsuta N."/>
            <person name="Sato K."/>
            <person name="Tanikawa M."/>
            <person name="Yamazaki M."/>
            <person name="Ninomiya K."/>
            <person name="Ishibashi T."/>
            <person name="Yamashita H."/>
            <person name="Murakawa K."/>
            <person name="Fujimori K."/>
            <person name="Tanai H."/>
            <person name="Kimata M."/>
            <person name="Watanabe M."/>
            <person name="Hiraoka S."/>
            <person name="Chiba Y."/>
            <person name="Ishida S."/>
            <person name="Ono Y."/>
            <person name="Takiguchi S."/>
            <person name="Watanabe S."/>
            <person name="Yosida M."/>
            <person name="Hotuta T."/>
            <person name="Kusano J."/>
            <person name="Kanehori K."/>
            <person name="Takahashi-Fujii A."/>
            <person name="Hara H."/>
            <person name="Tanase T.-O."/>
            <person name="Nomura Y."/>
            <person name="Togiya S."/>
            <person name="Komai F."/>
            <person name="Hara R."/>
            <person name="Takeuchi K."/>
            <person name="Arita M."/>
            <person name="Imose N."/>
            <person name="Musashino K."/>
            <person name="Yuuki H."/>
            <person name="Oshima A."/>
            <person name="Sasaki N."/>
            <person name="Aotsuka S."/>
            <person name="Yoshikawa Y."/>
            <person name="Matsunawa H."/>
            <person name="Ichihara T."/>
            <person name="Shiohata N."/>
            <person name="Sano S."/>
            <person name="Moriya S."/>
            <person name="Momiyama H."/>
            <person name="Satoh N."/>
            <person name="Takami S."/>
            <person name="Terashima Y."/>
            <person name="Suzuki O."/>
            <person name="Nakagawa S."/>
            <person name="Senoh A."/>
            <person name="Mizoguchi H."/>
            <person name="Goto Y."/>
            <person name="Shimizu F."/>
            <person name="Wakebe H."/>
            <person name="Hishigaki H."/>
            <person name="Watanabe T."/>
            <person name="Sugiyama A."/>
            <person name="Takemoto M."/>
            <person name="Kawakami B."/>
            <person name="Yamazaki M."/>
            <person name="Watanabe K."/>
            <person name="Kumagai A."/>
            <person name="Itakura S."/>
            <person name="Fukuzumi Y."/>
            <person name="Fujimori Y."/>
            <person name="Komiyama M."/>
            <person name="Tashiro H."/>
            <person name="Tanigami A."/>
            <person name="Fujiwara T."/>
            <person name="Ono T."/>
            <person name="Yamada K."/>
            <person name="Fujii Y."/>
            <person name="Ozaki K."/>
            <person name="Hirao M."/>
            <person name="Ohmori Y."/>
            <person name="Kawabata A."/>
            <person name="Hikiji T."/>
            <person name="Kobatake N."/>
            <person name="Inagaki H."/>
            <person name="Ikema Y."/>
            <person name="Okamoto S."/>
            <person name="Okitani R."/>
            <person name="Kawakami T."/>
            <person name="Noguchi S."/>
            <person name="Itoh T."/>
            <person name="Shigeta K."/>
            <person name="Senba T."/>
            <person name="Matsumura K."/>
            <person name="Nakajima Y."/>
            <person name="Mizuno T."/>
            <person name="Morinaga M."/>
            <person name="Sasaki M."/>
            <person name="Togashi T."/>
            <person name="Oyama M."/>
            <person name="Hata H."/>
            <person name="Watanabe M."/>
            <person name="Komatsu T."/>
            <person name="Mizushima-Sugano J."/>
            <person name="Satoh T."/>
            <person name="Shirai Y."/>
            <person name="Takahashi Y."/>
            <person name="Nakagawa K."/>
            <person name="Okumura K."/>
            <person name="Nagase T."/>
            <person name="Nomura N."/>
            <person name="Kikuchi H."/>
            <person name="Masuho Y."/>
            <person name="Yamashita R."/>
            <person name="Nakai K."/>
            <person name="Yada T."/>
            <person name="Nakamura Y."/>
            <person name="Ohara O."/>
            <person name="Isogai T."/>
            <person name="Sugano S."/>
        </authorList>
    </citation>
    <scope>NUCLEOTIDE SEQUENCE [LARGE SCALE MRNA]</scope>
    <scope>VARIANT LEU-128</scope>
    <source>
        <tissue>Tongue</tissue>
    </source>
</reference>
<reference key="4">
    <citation type="journal article" date="2006" name="Nature">
        <title>DNA sequence of human chromosome 17 and analysis of rearrangement in the human lineage.</title>
        <authorList>
            <person name="Zody M.C."/>
            <person name="Garber M."/>
            <person name="Adams D.J."/>
            <person name="Sharpe T."/>
            <person name="Harrow J."/>
            <person name="Lupski J.R."/>
            <person name="Nicholson C."/>
            <person name="Searle S.M."/>
            <person name="Wilming L."/>
            <person name="Young S.K."/>
            <person name="Abouelleil A."/>
            <person name="Allen N.R."/>
            <person name="Bi W."/>
            <person name="Bloom T."/>
            <person name="Borowsky M.L."/>
            <person name="Bugalter B.E."/>
            <person name="Butler J."/>
            <person name="Chang J.L."/>
            <person name="Chen C.-K."/>
            <person name="Cook A."/>
            <person name="Corum B."/>
            <person name="Cuomo C.A."/>
            <person name="de Jong P.J."/>
            <person name="DeCaprio D."/>
            <person name="Dewar K."/>
            <person name="FitzGerald M."/>
            <person name="Gilbert J."/>
            <person name="Gibson R."/>
            <person name="Gnerre S."/>
            <person name="Goldstein S."/>
            <person name="Grafham D.V."/>
            <person name="Grocock R."/>
            <person name="Hafez N."/>
            <person name="Hagopian D.S."/>
            <person name="Hart E."/>
            <person name="Norman C.H."/>
            <person name="Humphray S."/>
            <person name="Jaffe D.B."/>
            <person name="Jones M."/>
            <person name="Kamal M."/>
            <person name="Khodiyar V.K."/>
            <person name="LaButti K."/>
            <person name="Laird G."/>
            <person name="Lehoczky J."/>
            <person name="Liu X."/>
            <person name="Lokyitsang T."/>
            <person name="Loveland J."/>
            <person name="Lui A."/>
            <person name="Macdonald P."/>
            <person name="Major J.E."/>
            <person name="Matthews L."/>
            <person name="Mauceli E."/>
            <person name="McCarroll S.A."/>
            <person name="Mihalev A.H."/>
            <person name="Mudge J."/>
            <person name="Nguyen C."/>
            <person name="Nicol R."/>
            <person name="O'Leary S.B."/>
            <person name="Osoegawa K."/>
            <person name="Schwartz D.C."/>
            <person name="Shaw-Smith C."/>
            <person name="Stankiewicz P."/>
            <person name="Steward C."/>
            <person name="Swarbreck D."/>
            <person name="Venkataraman V."/>
            <person name="Whittaker C.A."/>
            <person name="Yang X."/>
            <person name="Zimmer A.R."/>
            <person name="Bradley A."/>
            <person name="Hubbard T."/>
            <person name="Birren B.W."/>
            <person name="Rogers J."/>
            <person name="Lander E.S."/>
            <person name="Nusbaum C."/>
        </authorList>
    </citation>
    <scope>NUCLEOTIDE SEQUENCE [LARGE SCALE GENOMIC DNA]</scope>
</reference>
<reference key="5">
    <citation type="journal article" date="2004" name="Genome Res.">
        <title>The status, quality, and expansion of the NIH full-length cDNA project: the Mammalian Gene Collection (MGC).</title>
        <authorList>
            <consortium name="The MGC Project Team"/>
        </authorList>
    </citation>
    <scope>NUCLEOTIDE SEQUENCE [LARGE SCALE MRNA]</scope>
    <scope>VARIANTS LEU-128 AND ASN-314</scope>
</reference>
<reference key="6">
    <citation type="journal article" date="2022" name="Nature">
        <title>Streptococcal pyrogenic exotoxin B cleaves GSDMA and triggers pyroptosis.</title>
        <authorList>
            <person name="Deng W."/>
            <person name="Bai Y."/>
            <person name="Deng F."/>
            <person name="Pan Y."/>
            <person name="Mei S."/>
            <person name="Zheng Z."/>
            <person name="Min R."/>
            <person name="Wu Z."/>
            <person name="Li W."/>
            <person name="Miao R."/>
            <person name="Zhang Z."/>
            <person name="Kupper T.S."/>
            <person name="Lieberman J."/>
            <person name="Liu X."/>
        </authorList>
    </citation>
    <scope>PROTEIN SEQUENCE OF 247-252</scope>
    <scope>FUNCTION</scope>
    <scope>ACTIVITY REGULATION</scope>
    <scope>SUBCELLULAR LOCATION</scope>
    <scope>SUBUNIT</scope>
    <scope>PROTEOLYTIC CLEAVAGE</scope>
    <scope>MUTAGENESIS OF ILE-245 AND GLN-246</scope>
</reference>
<reference key="7">
    <citation type="journal article" date="2022" name="Nature">
        <title>Group A Streptococcus induces GSDMA-dependent pyroptosis in keratinocytes.</title>
        <authorList>
            <person name="LaRock D.L."/>
            <person name="Johnson A.F."/>
            <person name="Wilde S."/>
            <person name="Sands J.S."/>
            <person name="Monteiro M.P."/>
            <person name="LaRock C.N."/>
        </authorList>
    </citation>
    <scope>PARTIAL PROTEIN SEQUENCE</scope>
    <scope>FUNCTION</scope>
    <scope>ACTIVITY REGULATION</scope>
    <scope>SUBCELLULAR LOCATION</scope>
    <scope>PROTEOLYTIC CLEAVAGE</scope>
</reference>
<reference key="8">
    <citation type="journal article" date="2000" name="Mamm. Genome">
        <title>Gasdermin (Gsdm) localizing to mouse chromosome 11 is predominantly expressed in upper gastrointestinal tract but significantly suppressed in human gastric cancer cells.</title>
        <authorList>
            <person name="Saeki N."/>
            <person name="Kuwahara Y."/>
            <person name="Sasaki H."/>
            <person name="Satoh H."/>
            <person name="Shiroishi T."/>
        </authorList>
    </citation>
    <scope>TISSUE SPECIFICITY</scope>
</reference>
<reference key="9">
    <citation type="journal article" date="2009" name="Genes Chromosomes Cancer">
        <title>Distinctive expression and function of four GSDM family genes (GSDMA-D) in normal and malignant upper gastrointestinal epithelium.</title>
        <authorList>
            <person name="Saeki N."/>
            <person name="Usui T."/>
            <person name="Aoyagi K."/>
            <person name="Kim D.H."/>
            <person name="Sato M."/>
            <person name="Mabuchi T."/>
            <person name="Yanagihara K."/>
            <person name="Ogawa K."/>
            <person name="Sakamoto H."/>
            <person name="Yoshida T."/>
            <person name="Sasaki H."/>
        </authorList>
    </citation>
    <scope>TISSUE SPECIFICITY</scope>
</reference>
<reference key="10">
    <citation type="journal article" date="2012" name="Proc. Natl. Acad. Sci. U.S.A.">
        <title>N-terminal acetylome analyses and functional insights of the N-terminal acetyltransferase NatB.</title>
        <authorList>
            <person name="Van Damme P."/>
            <person name="Lasa M."/>
            <person name="Polevoda B."/>
            <person name="Gazquez C."/>
            <person name="Elosegui-Artola A."/>
            <person name="Kim D.S."/>
            <person name="De Juan-Pardo E."/>
            <person name="Demeyer K."/>
            <person name="Hole K."/>
            <person name="Larrea E."/>
            <person name="Timmerman E."/>
            <person name="Prieto J."/>
            <person name="Arnesen T."/>
            <person name="Sherman F."/>
            <person name="Gevaert K."/>
            <person name="Aldabe R."/>
        </authorList>
    </citation>
    <scope>IDENTIFICATION BY MASS SPECTROMETRY [LARGE SCALE ANALYSIS]</scope>
</reference>
<reference key="11">
    <citation type="journal article" date="2016" name="Nature">
        <title>Pore-forming activity and structural autoinhibition of the gasdermin family.</title>
        <authorList>
            <person name="Ding J."/>
            <person name="Wang K."/>
            <person name="Liu W."/>
            <person name="She Y."/>
            <person name="Sun Q."/>
            <person name="Shi J."/>
            <person name="Sun H."/>
            <person name="Wang D.C."/>
            <person name="Shao F."/>
        </authorList>
    </citation>
    <scope>FUNCTION</scope>
    <scope>MUTAGENESIS OF LEU-260; TYR-334 AND ALA-338</scope>
</reference>
<reference key="12">
    <citation type="journal article" date="2024" name="Nature">
        <title>ROS-dependent S-palmitoylation activates cleaved and intact gasdermin D.</title>
        <authorList>
            <person name="Du G."/>
            <person name="Healy L.B."/>
            <person name="David L."/>
            <person name="Walker C."/>
            <person name="El-Baba T.J."/>
            <person name="Lutomski C.A."/>
            <person name="Goh B."/>
            <person name="Gu B."/>
            <person name="Pi X."/>
            <person name="Devant P."/>
            <person name="Fontana P."/>
            <person name="Dong Y."/>
            <person name="Ma X."/>
            <person name="Miao R."/>
            <person name="Balasubramanian A."/>
            <person name="Puthenveetil R."/>
            <person name="Banerjee A."/>
            <person name="Luo H.R."/>
            <person name="Kagan J.C."/>
            <person name="Oh S.F."/>
            <person name="Robinson C.V."/>
            <person name="Lieberman J."/>
            <person name="Wu H."/>
        </authorList>
    </citation>
    <scope>PALMITOYLATION</scope>
</reference>
<keyword id="KW-1003">Cell membrane</keyword>
<keyword id="KW-0963">Cytoplasm</keyword>
<keyword id="KW-0903">Direct protein sequencing</keyword>
<keyword id="KW-0449">Lipoprotein</keyword>
<keyword id="KW-0472">Membrane</keyword>
<keyword id="KW-1210">Necrosis</keyword>
<keyword id="KW-0564">Palmitate</keyword>
<keyword id="KW-1267">Proteomics identification</keyword>
<keyword id="KW-1185">Reference proteome</keyword>
<keyword id="KW-0812">Transmembrane</keyword>
<keyword id="KW-1134">Transmembrane beta strand</keyword>
<gene>
    <name evidence="17" type="primary">GSDMA</name>
    <name evidence="11 12" type="synonym">GSDM</name>
    <name type="synonym">GSDM1</name>
    <name evidence="13" type="ORF">FKSG9</name>
</gene>
<proteinExistence type="evidence at protein level"/>
<sequence>MTMFENVTRALARQLNPRGDLTPLDSLIDFKRFHPFCLVLRKRKSTLFWGARYVRTDYTLLDVLEPGSSPSDPTDTGNFGFKNMLDTRVEGDVDVPKTVKVKGTAGLSQNSTLEVQTLSVAPKALETVQERKLAADHPFLKEMQDQGENLYVVMEVVETVQEVTLERAGKAEACFSLPFFAPLGLQGSINHKEAVTIPKGCVLAFRVRQLMVKGKDEWDIPHICNDNMQTFPPGEKSGEEKVILIQASDVGDVHEGFRTLKEEVQRETQQVEKLSRVGQSSLLSSLSKLLGKKKELQDLELALEGALDKGHEVTLEALPKDVLLSKEAVGAILYFVGALTELSEAQQKLLVKSMEKKILPVQLKLVESTMEQNFLLDKEGVFPLQPELLSSLGDEELTLTEALVGLSGLEVQRSGPQYMWDPDTLPRLCALYAGLSLLQQLTKAS</sequence>
<name>GSDMA_HUMAN</name>
<feature type="chain" id="PRO_0000148173" description="Gasdermin-A">
    <location>
        <begin position="1"/>
        <end position="445"/>
    </location>
</feature>
<feature type="chain" id="PRO_0000451664" description="Gasdermin-A, N-terminal" evidence="8 9">
    <location>
        <begin position="1"/>
        <end position="246"/>
    </location>
</feature>
<feature type="chain" id="PRO_0000451665" description="Gasdermin-A, C-terminal" evidence="15 16">
    <location>
        <begin position="247"/>
        <end position="445"/>
    </location>
</feature>
<feature type="transmembrane region" description="Beta stranded" evidence="1">
    <location>
        <begin position="78"/>
        <end position="95"/>
    </location>
</feature>
<feature type="transmembrane region" description="Beta stranded" evidence="1">
    <location>
        <begin position="99"/>
        <end position="120"/>
    </location>
</feature>
<feature type="transmembrane region" description="Beta stranded" evidence="1">
    <location>
        <begin position="163"/>
        <end position="179"/>
    </location>
</feature>
<feature type="transmembrane region" description="Beta stranded" evidence="1">
    <location>
        <begin position="183"/>
        <end position="197"/>
    </location>
</feature>
<feature type="region of interest" description="Triggers pyroptosis" evidence="7">
    <location>
        <begin position="1"/>
        <end position="251"/>
    </location>
</feature>
<feature type="binding site" evidence="1">
    <location>
        <begin position="9"/>
        <end position="13"/>
    </location>
    <ligand>
        <name>a cardiolipin</name>
        <dbReference type="ChEBI" id="CHEBI:62237"/>
    </ligand>
</feature>
<feature type="site" description="(Microbial infection) Cleavage; by S.pyogenes SpeB" evidence="9">
    <location>
        <begin position="244"/>
        <end position="245"/>
    </location>
</feature>
<feature type="site" description="(Microbial infection) Cleavage; by S.pyogenes SpeB" evidence="8 9">
    <location>
        <begin position="245"/>
        <end position="246"/>
    </location>
</feature>
<feature type="sequence variant" id="VAR_035010" description="In dbSNP:rs3894194.">
    <original>R</original>
    <variation>Q</variation>
    <location>
        <position position="18"/>
    </location>
</feature>
<feature type="sequence variant" id="VAR_035011" description="In dbSNP:rs7212938." evidence="3 4 5">
    <original>V</original>
    <variation>L</variation>
    <location>
        <position position="128"/>
    </location>
</feature>
<feature type="sequence variant" id="VAR_035012" description="In dbSNP:rs7212944." evidence="5">
    <original>E</original>
    <variation>K</variation>
    <location>
        <position position="130"/>
    </location>
</feature>
<feature type="sequence variant" id="VAR_062005" description="In dbSNP:rs56030650." evidence="4">
    <original>T</original>
    <variation>N</variation>
    <location>
        <position position="314"/>
    </location>
</feature>
<feature type="mutagenesis site" description="Abolished cleavage by S.pyogenes effector protein SpeB, preventing pyroptosis." evidence="8">
    <original>I</original>
    <variation>N</variation>
    <location>
        <position position="245"/>
    </location>
</feature>
<feature type="mutagenesis site" description="Abolished cleavage by S.pyogenes effector protein SpeB, preventing pyroptosis." evidence="8">
    <original>Q</original>
    <variation>E</variation>
    <location>
        <position position="246"/>
    </location>
</feature>
<feature type="mutagenesis site" description="Spontaneous pyroptosis-inducing activity." evidence="7">
    <original>L</original>
    <variation>D</variation>
    <location>
        <position position="260"/>
    </location>
</feature>
<feature type="mutagenesis site" description="Spontaneous pyroptosis-inducing activity." evidence="7">
    <original>Y</original>
    <variation>D</variation>
    <location>
        <position position="334"/>
    </location>
</feature>
<feature type="mutagenesis site" description="Spontaneous pyroptosis-inducing activity." evidence="7">
    <original>A</original>
    <variation>D</variation>
    <location>
        <position position="338"/>
    </location>
</feature>
<feature type="sequence conflict" description="In Ref. 2; AAL14426." evidence="14" ref="2">
    <original>R</original>
    <variation>RR</variation>
    <location>
        <position position="131"/>
    </location>
</feature>
<feature type="sequence conflict" description="In Ref. 2; AAL14426." evidence="14" ref="2">
    <original>APLGLQ</original>
    <variation>LPIGAT</variation>
    <location>
        <begin position="181"/>
        <end position="186"/>
    </location>
</feature>
<feature type="sequence conflict" description="In Ref. 2; AAL14426." evidence="14" ref="2">
    <original>EKSGEEKV</original>
    <variation>GKPGEGKF</variation>
    <location>
        <begin position="235"/>
        <end position="242"/>
    </location>
</feature>
<feature type="sequence conflict" description="In Ref. 2; AAL14426." evidence="14" ref="2">
    <original>DV</original>
    <variation>EM</variation>
    <location>
        <begin position="252"/>
        <end position="253"/>
    </location>
</feature>
<feature type="sequence conflict" description="In Ref. 2; AAL14426." evidence="14" ref="2">
    <original>ES</original>
    <variation>RG</variation>
    <location>
        <begin position="367"/>
        <end position="368"/>
    </location>
</feature>
<feature type="sequence conflict" description="In Ref. 3; BAC04790." evidence="14" ref="3">
    <original>L</original>
    <variation>H</variation>
    <location>
        <position position="437"/>
    </location>
</feature>